<reference key="1">
    <citation type="journal article" date="1990" name="J. Bacteriol.">
        <title>Organization and sequence analysis of the 2,4-dichlorophenol hydroxylase and dichlorocatechol oxidative operons of plasmid pJP4.</title>
        <authorList>
            <person name="Perkins E.J."/>
            <person name="Gordon M.P."/>
            <person name="Caceres O."/>
            <person name="Lurquin P.F."/>
        </authorList>
    </citation>
    <scope>NUCLEOTIDE SEQUENCE [GENOMIC DNA]</scope>
    <source>
        <plasmid>pJP4</plasmid>
    </source>
</reference>
<reference key="2">
    <citation type="journal article" date="2004" name="Environ. Microbiol.">
        <title>Genetic organization of the catabolic plasmid pJP4 from Ralstonia eutropha JMP134 (pJP4) reveals mechanisms of adaptation to chloroaromatic pollutants and evolution of specialized chloroaromatic degradation pathways.</title>
        <authorList>
            <person name="Trefault N."/>
            <person name="De la Iglesia R."/>
            <person name="Molina A.M."/>
            <person name="Manzano M."/>
            <person name="Ledger T."/>
            <person name="Perez-Pantoja D."/>
            <person name="Sanchez M.A."/>
            <person name="Stuardo M."/>
            <person name="Gonzalez B."/>
        </authorList>
    </citation>
    <scope>NUCLEOTIDE SEQUENCE [GENOMIC DNA]</scope>
    <source>
        <plasmid>pJP4</plasmid>
    </source>
</reference>
<reference key="3">
    <citation type="journal article" date="2010" name="PLoS ONE">
        <title>The complete multipartite genome sequence of Cupriavidus necator JMP134, a versatile pollutant degrader.</title>
        <authorList>
            <person name="Lykidis A."/>
            <person name="Perez-Pantoja D."/>
            <person name="Ledger T."/>
            <person name="Mavromatis K."/>
            <person name="Anderson I.J."/>
            <person name="Ivanova N.N."/>
            <person name="Hooper S.D."/>
            <person name="Lapidus A."/>
            <person name="Lucas S."/>
            <person name="Gonzalez B."/>
            <person name="Kyrpides N.C."/>
        </authorList>
    </citation>
    <scope>NUCLEOTIDE SEQUENCE [LARGE SCALE GENOMIC DNA]</scope>
    <source>
        <strain>JMP134 / LMG 1197</strain>
        <plasmid>pPJ4</plasmid>
    </source>
</reference>
<organism>
    <name type="scientific">Cupriavidus pinatubonensis (strain JMP 134 / LMG 1197)</name>
    <name type="common">Cupriavidus necator (strain JMP 134)</name>
    <dbReference type="NCBI Taxonomy" id="264198"/>
    <lineage>
        <taxon>Bacteria</taxon>
        <taxon>Pseudomonadati</taxon>
        <taxon>Pseudomonadota</taxon>
        <taxon>Betaproteobacteria</taxon>
        <taxon>Burkholderiales</taxon>
        <taxon>Burkholderiaceae</taxon>
        <taxon>Cupriavidus</taxon>
    </lineage>
</organism>
<evidence type="ECO:0000255" key="1"/>
<evidence type="ECO:0000305" key="2"/>
<name>TFDB_CUPPJ</name>
<dbReference type="EC" id="1.14.13.20"/>
<dbReference type="EMBL" id="M35097">
    <property type="protein sequence ID" value="AAA98266.1"/>
    <property type="molecule type" value="Genomic_DNA"/>
</dbReference>
<dbReference type="EMBL" id="AY365053">
    <property type="protein sequence ID" value="AAR31035.1"/>
    <property type="molecule type" value="Genomic_DNA"/>
</dbReference>
<dbReference type="EMBL" id="CP000093">
    <property type="protein sequence ID" value="AAZ65760.1"/>
    <property type="molecule type" value="Genomic_DNA"/>
</dbReference>
<dbReference type="PIR" id="E35255">
    <property type="entry name" value="E35255"/>
</dbReference>
<dbReference type="RefSeq" id="WP_011178382.1">
    <property type="nucleotide sequence ID" value="NZ_AY365053.1"/>
</dbReference>
<dbReference type="SMR" id="P27138"/>
<dbReference type="GeneID" id="55536838"/>
<dbReference type="KEGG" id="reu:Reut_D6462"/>
<dbReference type="HOGENOM" id="CLU_009665_14_0_4"/>
<dbReference type="OrthoDB" id="3443359at2"/>
<dbReference type="BioCyc" id="MetaCyc:MONOMER-14385"/>
<dbReference type="UniPathway" id="UPA00685"/>
<dbReference type="GO" id="GO:0018666">
    <property type="term" value="F:2,4-dichlorophenol 6-monooxygenase activity"/>
    <property type="evidence" value="ECO:0000303"/>
    <property type="project" value="UniProtKB"/>
</dbReference>
<dbReference type="GO" id="GO:0071949">
    <property type="term" value="F:FAD binding"/>
    <property type="evidence" value="ECO:0007669"/>
    <property type="project" value="InterPro"/>
</dbReference>
<dbReference type="GO" id="GO:0046300">
    <property type="term" value="P:2,4-dichlorophenoxyacetic acid catabolic process"/>
    <property type="evidence" value="ECO:0000303"/>
    <property type="project" value="UniProtKB"/>
</dbReference>
<dbReference type="Gene3D" id="3.40.30.120">
    <property type="match status" value="1"/>
</dbReference>
<dbReference type="Gene3D" id="3.30.9.10">
    <property type="entry name" value="D-Amino Acid Oxidase, subunit A, domain 2"/>
    <property type="match status" value="1"/>
</dbReference>
<dbReference type="Gene3D" id="3.50.50.60">
    <property type="entry name" value="FAD/NAD(P)-binding domain"/>
    <property type="match status" value="1"/>
</dbReference>
<dbReference type="InterPro" id="IPR002938">
    <property type="entry name" value="FAD-bd"/>
</dbReference>
<dbReference type="InterPro" id="IPR036188">
    <property type="entry name" value="FAD/NAD-bd_sf"/>
</dbReference>
<dbReference type="InterPro" id="IPR050641">
    <property type="entry name" value="RIFMO-like"/>
</dbReference>
<dbReference type="PANTHER" id="PTHR43004:SF8">
    <property type="entry name" value="FAD-BINDING DOMAIN-CONTAINING PROTEIN-RELATED"/>
    <property type="match status" value="1"/>
</dbReference>
<dbReference type="PANTHER" id="PTHR43004">
    <property type="entry name" value="TRK SYSTEM POTASSIUM UPTAKE PROTEIN"/>
    <property type="match status" value="1"/>
</dbReference>
<dbReference type="Pfam" id="PF01494">
    <property type="entry name" value="FAD_binding_3"/>
    <property type="match status" value="1"/>
</dbReference>
<dbReference type="Pfam" id="PF21274">
    <property type="entry name" value="Rng_hyd_C"/>
    <property type="match status" value="1"/>
</dbReference>
<dbReference type="PRINTS" id="PR00420">
    <property type="entry name" value="RNGMNOXGNASE"/>
</dbReference>
<dbReference type="SUPFAM" id="SSF51905">
    <property type="entry name" value="FAD/NAD(P)-binding domain"/>
    <property type="match status" value="1"/>
</dbReference>
<proteinExistence type="inferred from homology"/>
<geneLocation type="plasmid">
    <name>pJP4</name>
</geneLocation>
<geneLocation type="plasmid">
    <name>pPJ4</name>
</geneLocation>
<gene>
    <name type="primary">tfdB</name>
    <name type="synonym">tfdBI</name>
    <name type="ordered locus">Reut_D6462</name>
</gene>
<feature type="chain" id="PRO_0000214049" description="2,4-dichlorophenol 6-monooxygenase">
    <location>
        <begin position="1"/>
        <end position="598"/>
    </location>
</feature>
<feature type="binding site" evidence="1">
    <location>
        <begin position="8"/>
        <end position="37"/>
    </location>
    <ligand>
        <name>FAD</name>
        <dbReference type="ChEBI" id="CHEBI:57692"/>
    </ligand>
</feature>
<feature type="binding site" evidence="1">
    <location>
        <begin position="301"/>
        <end position="311"/>
    </location>
    <ligand>
        <name>FAD</name>
        <dbReference type="ChEBI" id="CHEBI:57692"/>
    </ligand>
</feature>
<sequence>MALTIETDVLVVGTGPAGASAGALLARYGVRTMLINKYNWTAPTPRAHITNQRTMEILRDLGLEAEARLYAAPNDLMGENTICASLAGEEFGRIRTWGTDVRRRADYDECSPTSMCDLPQNYLEPILVKSAALDGCKVRFDTEYLGHEQDADGVSSRLRDRLNGEEFTVRSKYLIGADGANSRVVSDLDLPLEGTMGKSGSINLLFEADLDRYVAHRPSVLYWVIQPGSDIGGLGIGVVRMVRPWNKWLAIWGYDVEQGPPEISESFARRIVHNLIGDDSVPLKIEGISTWTVNDMYATRLQQGRVFCAGDAVHRHPPTNGLGSNTSIQDSFNLAWKIAMVLNGTADESLLDTYTIERAPIAKQVVCRANKSLEDFPPIAMALGLPQAKSADEMKSNMARRKEPGPEAQAQRTRLREAIAGTNYVYNAHGVEMNQRYDSPAIVADNSPDEVFRDVELYHQASTRPGAPMPHVWVYASGDGHRISTKDLCGKGNFTLFTGIGGAAWQDAAAAVSRQLGVAVTVRIIGPGQAYEDHYGDFARISEIIDTGAILVRPDFHVAYRATSLPADAAGDLVSAMRRILGRQSERSSALRVTSRAI</sequence>
<accession>P27138</accession>
<accession>Q46M70</accession>
<comment type="function">
    <text>Transforms 2,4-dichlorophenol (2,4-DCP) into 3,5-dichlorocatechol.</text>
</comment>
<comment type="catalytic activity">
    <reaction>
        <text>2,4-dichlorophenol + NADPH + O2 + H(+) = 3,5-dichlorocatechol + NADP(+) + H2O</text>
        <dbReference type="Rhea" id="RHEA:20920"/>
        <dbReference type="ChEBI" id="CHEBI:15377"/>
        <dbReference type="ChEBI" id="CHEBI:15378"/>
        <dbReference type="ChEBI" id="CHEBI:15379"/>
        <dbReference type="ChEBI" id="CHEBI:15788"/>
        <dbReference type="ChEBI" id="CHEBI:16738"/>
        <dbReference type="ChEBI" id="CHEBI:57783"/>
        <dbReference type="ChEBI" id="CHEBI:58349"/>
        <dbReference type="EC" id="1.14.13.20"/>
    </reaction>
</comment>
<comment type="cofactor">
    <cofactor>
        <name>FAD</name>
        <dbReference type="ChEBI" id="CHEBI:57692"/>
    </cofactor>
</comment>
<comment type="pathway">
    <text>Xenobiotic degradation; (2,4-dichlorophenoxy)acetate degradation.</text>
</comment>
<comment type="subunit">
    <text>Homotetramer.</text>
</comment>
<comment type="similarity">
    <text evidence="2">Belongs to the PheA/TfdB FAD monooxygenase family.</text>
</comment>
<keyword id="KW-0058">Aromatic hydrocarbons catabolism</keyword>
<keyword id="KW-0274">FAD</keyword>
<keyword id="KW-0285">Flavoprotein</keyword>
<keyword id="KW-0503">Monooxygenase</keyword>
<keyword id="KW-0521">NADP</keyword>
<keyword id="KW-0560">Oxidoreductase</keyword>
<keyword id="KW-0614">Plasmid</keyword>
<protein>
    <recommendedName>
        <fullName>2,4-dichlorophenol 6-monooxygenase</fullName>
        <ecNumber>1.14.13.20</ecNumber>
    </recommendedName>
    <alternativeName>
        <fullName>2,4-dichlorophenol hydroxylase</fullName>
        <shortName>2,4-DCP hydroxylase</shortName>
    </alternativeName>
</protein>